<dbReference type="EC" id="1.14.99.56" evidence="11"/>
<dbReference type="EMBL" id="CCBN010000021">
    <property type="protein sequence ID" value="CDO57431.1"/>
    <property type="molecule type" value="Genomic_DNA"/>
</dbReference>
<dbReference type="SMR" id="A0A0J9XK58"/>
<dbReference type="STRING" id="1173061.A0A0J9XK58"/>
<dbReference type="OrthoDB" id="5985073at2759"/>
<dbReference type="Proteomes" id="UP000242525">
    <property type="component" value="Unassembled WGS sequence"/>
</dbReference>
<dbReference type="GO" id="GO:0005576">
    <property type="term" value="C:extracellular region"/>
    <property type="evidence" value="ECO:0007669"/>
    <property type="project" value="UniProtKB-SubCell"/>
</dbReference>
<dbReference type="GO" id="GO:0046872">
    <property type="term" value="F:metal ion binding"/>
    <property type="evidence" value="ECO:0007669"/>
    <property type="project" value="UniProtKB-KW"/>
</dbReference>
<dbReference type="GO" id="GO:0004497">
    <property type="term" value="F:monooxygenase activity"/>
    <property type="evidence" value="ECO:0007669"/>
    <property type="project" value="UniProtKB-KW"/>
</dbReference>
<dbReference type="GO" id="GO:0030245">
    <property type="term" value="P:cellulose catabolic process"/>
    <property type="evidence" value="ECO:0007669"/>
    <property type="project" value="UniProtKB-KW"/>
</dbReference>
<dbReference type="CDD" id="cd21175">
    <property type="entry name" value="LPMO_AA9"/>
    <property type="match status" value="1"/>
</dbReference>
<dbReference type="Gene3D" id="2.70.50.70">
    <property type="match status" value="1"/>
</dbReference>
<dbReference type="InterPro" id="IPR049892">
    <property type="entry name" value="AA9"/>
</dbReference>
<dbReference type="InterPro" id="IPR005103">
    <property type="entry name" value="AA9_LPMO"/>
</dbReference>
<dbReference type="PANTHER" id="PTHR33353:SF10">
    <property type="entry name" value="ENDO-BETA-1,4-GLUCANASE D"/>
    <property type="match status" value="1"/>
</dbReference>
<dbReference type="PANTHER" id="PTHR33353">
    <property type="entry name" value="PUTATIVE (AFU_ORTHOLOGUE AFUA_1G12560)-RELATED"/>
    <property type="match status" value="1"/>
</dbReference>
<dbReference type="Pfam" id="PF03443">
    <property type="entry name" value="AA9"/>
    <property type="match status" value="1"/>
</dbReference>
<reference key="1">
    <citation type="submission" date="2014-03" db="EMBL/GenBank/DDBJ databases">
        <authorList>
            <person name="Casaregola S."/>
        </authorList>
    </citation>
    <scope>NUCLEOTIDE SEQUENCE [LARGE SCALE GENOMIC DNA]</scope>
    <source>
        <strain>CLIB 918</strain>
    </source>
</reference>
<reference key="2">
    <citation type="journal article" date="2017" name="Biotechnol. Biofuels">
        <title>The yeast Geotrichum candidum encodes functional lytic polysaccharide monooxygenases.</title>
        <authorList>
            <person name="Ladeveze S."/>
            <person name="Haon M."/>
            <person name="Villares A."/>
            <person name="Cathala B."/>
            <person name="Grisel S."/>
            <person name="Herpoel-Gimbert I."/>
            <person name="Henrissat B."/>
            <person name="Berrin J.G."/>
        </authorList>
    </citation>
    <scope>FUNCTION</scope>
    <scope>SUBCELLULAR LOCATION</scope>
</reference>
<gene>
    <name evidence="9" type="primary">LPMO9C</name>
    <name type="ORF">BN980_GECA21s01121g</name>
</gene>
<keyword id="KW-0119">Carbohydrate metabolism</keyword>
<keyword id="KW-0136">Cellulose degradation</keyword>
<keyword id="KW-0186">Copper</keyword>
<keyword id="KW-1015">Disulfide bond</keyword>
<keyword id="KW-0325">Glycoprotein</keyword>
<keyword id="KW-0479">Metal-binding</keyword>
<keyword id="KW-0503">Monooxygenase</keyword>
<keyword id="KW-0560">Oxidoreductase</keyword>
<keyword id="KW-0624">Polysaccharide degradation</keyword>
<keyword id="KW-0964">Secreted</keyword>
<keyword id="KW-0732">Signal</keyword>
<organism>
    <name type="scientific">Geotrichum candidum</name>
    <name type="common">Oospora lactis</name>
    <name type="synonym">Dipodascus geotrichum</name>
    <dbReference type="NCBI Taxonomy" id="1173061"/>
    <lineage>
        <taxon>Eukaryota</taxon>
        <taxon>Fungi</taxon>
        <taxon>Dikarya</taxon>
        <taxon>Ascomycota</taxon>
        <taxon>Saccharomycotina</taxon>
        <taxon>Dipodascomycetes</taxon>
        <taxon>Dipodascales</taxon>
        <taxon>Dipodascaceae</taxon>
        <taxon>Geotrichum</taxon>
    </lineage>
</organism>
<feature type="signal peptide" evidence="5">
    <location>
        <begin position="1"/>
        <end position="18"/>
    </location>
</feature>
<feature type="chain" id="PRO_5005325764" description="AA9 family lytic polysaccharide monooxygenase C">
    <location>
        <begin position="19"/>
        <end position="530"/>
    </location>
</feature>
<feature type="region of interest" description="Disordered" evidence="7">
    <location>
        <begin position="238"/>
        <end position="279"/>
    </location>
</feature>
<feature type="region of interest" description="Disordered" evidence="7">
    <location>
        <begin position="297"/>
        <end position="329"/>
    </location>
</feature>
<feature type="region of interest" description="Disordered" evidence="7">
    <location>
        <begin position="348"/>
        <end position="375"/>
    </location>
</feature>
<feature type="region of interest" description="Disordered" evidence="7">
    <location>
        <begin position="492"/>
        <end position="512"/>
    </location>
</feature>
<feature type="compositionally biased region" description="Low complexity" evidence="7">
    <location>
        <begin position="238"/>
        <end position="251"/>
    </location>
</feature>
<feature type="compositionally biased region" description="Basic and acidic residues" evidence="7">
    <location>
        <begin position="312"/>
        <end position="324"/>
    </location>
</feature>
<feature type="compositionally biased region" description="Low complexity" evidence="7">
    <location>
        <begin position="348"/>
        <end position="368"/>
    </location>
</feature>
<feature type="binding site" evidence="4">
    <location>
        <position position="19"/>
    </location>
    <ligand>
        <name>Cu(2+)</name>
        <dbReference type="ChEBI" id="CHEBI:29036"/>
        <note>catalytic</note>
    </ligand>
</feature>
<feature type="binding site" evidence="4">
    <location>
        <position position="103"/>
    </location>
    <ligand>
        <name>Cu(2+)</name>
        <dbReference type="ChEBI" id="CHEBI:29036"/>
        <note>catalytic</note>
    </ligand>
</feature>
<feature type="binding site" evidence="3">
    <location>
        <position position="185"/>
    </location>
    <ligand>
        <name>O2</name>
        <dbReference type="ChEBI" id="CHEBI:15379"/>
    </ligand>
</feature>
<feature type="binding site" evidence="4">
    <location>
        <position position="187"/>
    </location>
    <ligand>
        <name>Cu(2+)</name>
        <dbReference type="ChEBI" id="CHEBI:29036"/>
        <note>catalytic</note>
    </ligand>
</feature>
<feature type="glycosylation site" description="N-linked (GlcNAc...) asparagine" evidence="6">
    <location>
        <position position="150"/>
    </location>
</feature>
<feature type="disulfide bond" evidence="2">
    <location>
        <begin position="72"/>
        <end position="190"/>
    </location>
</feature>
<feature type="disulfide bond" evidence="2">
    <location>
        <begin position="114"/>
        <end position="118"/>
    </location>
</feature>
<evidence type="ECO:0000250" key="1">
    <source>
        <dbReference type="UniProtKB" id="A0A0J9XL55"/>
    </source>
</evidence>
<evidence type="ECO:0000250" key="2">
    <source>
        <dbReference type="UniProtKB" id="A0A5J6BJN2"/>
    </source>
</evidence>
<evidence type="ECO:0000250" key="3">
    <source>
        <dbReference type="UniProtKB" id="Q1K8B6"/>
    </source>
</evidence>
<evidence type="ECO:0000250" key="4">
    <source>
        <dbReference type="UniProtKB" id="Q7Z9M7"/>
    </source>
</evidence>
<evidence type="ECO:0000255" key="5"/>
<evidence type="ECO:0000255" key="6">
    <source>
        <dbReference type="PROSITE-ProRule" id="PRU00498"/>
    </source>
</evidence>
<evidence type="ECO:0000256" key="7">
    <source>
        <dbReference type="SAM" id="MobiDB-lite"/>
    </source>
</evidence>
<evidence type="ECO:0000269" key="8">
    <source>
    </source>
</evidence>
<evidence type="ECO:0000303" key="9">
    <source>
    </source>
</evidence>
<evidence type="ECO:0000305" key="10"/>
<evidence type="ECO:0000305" key="11">
    <source>
    </source>
</evidence>
<comment type="function">
    <text evidence="1 8">Lytic polysaccharide monooxygenase (LPMO) that depolymerizes polysaccharides via the oxidation of scissile alpha- or beta-(1-4)-glycosidic bonds, yielding C1 or C4 oxidation products (By similarity). Catalysis by LPMOs requires the reduction of the active-site copper from Cu(II) to Cu(I) by a reducing agent and H(2)O(2) or O(2) as a cosubstrate (By similarity). Amorphous cellulose is not a suitable substrate for LPMO9C, which may act at the surface of cellulose microfibrils without any release of soluble products (PubMed:28919928).</text>
</comment>
<comment type="catalytic activity">
    <reaction evidence="11">
        <text>[(1-&gt;4)-beta-D-glucosyl]n+m + reduced acceptor + O2 = 4-dehydro-beta-D-glucosyl-[(1-&gt;4)-beta-D-glucosyl]n-1 + [(1-&gt;4)-beta-D-glucosyl]m + acceptor + H2O.</text>
        <dbReference type="EC" id="1.14.99.56"/>
    </reaction>
</comment>
<comment type="cofactor">
    <cofactor evidence="3">
        <name>Cu(2+)</name>
        <dbReference type="ChEBI" id="CHEBI:29036"/>
    </cofactor>
    <text evidence="3">Binds 1 copper ion per subunit.</text>
</comment>
<comment type="subcellular location">
    <subcellularLocation>
        <location evidence="8">Secreted</location>
    </subcellularLocation>
</comment>
<comment type="biotechnology">
    <text evidence="2">Lignocellulose is the most abundant polymeric composite on Earth and is a recalcitrant but promising renewable substrate for industrial biotechnology applications. Together with cellobiose dehydrogenases (CDHs) an enzymatic system capable of oxidative cellulose cleavage is formed, which increases the efficiency of cellulases and put LPMOs at focus of biofuel research.</text>
</comment>
<comment type="similarity">
    <text evidence="10">Belongs to the polysaccharide monooxygenase AA9 family.</text>
</comment>
<proteinExistence type="inferred from homology"/>
<protein>
    <recommendedName>
        <fullName evidence="9">AA9 family lytic polysaccharide monooxygenase C</fullName>
        <shortName evidence="9">LPMO9C</shortName>
        <ecNumber evidence="11">1.14.99.56</ecNumber>
    </recommendedName>
    <alternativeName>
        <fullName evidence="10">Cellulase LPMO9C</fullName>
    </alternativeName>
    <alternativeName>
        <fullName evidence="10">Endo-beta-1,4-glucanase LPMO9C</fullName>
        <shortName evidence="10">Endoglucanase LPMO9C</shortName>
    </alternativeName>
    <alternativeName>
        <fullName evidence="10">Glycosyl hydrolase 61 family protein LPMO9C</fullName>
    </alternativeName>
</protein>
<accession>A0A0J9XK58</accession>
<name>LP9C_GEOCN</name>
<sequence>MQLKSTVHFLSLLAYTAAHGFVSDISVGDNWYVGSNPFQDAWKQPSPERVVWSFFDGGNGPVADLTTKNIVCNTNAQAAKLYIDSVEAGSQVTFYWTSWPSGHLGPIMTYLAKCNGDCRDNDPSSLSYFKIDEKGLENGQWATQELIANNNSWTVTLPSDISAGNYLIRHELLALQESSRRLGAQFYPMCTNLKITGGGSANPEGVTFPGAYKADDPGILVDIFNGISDYVIPGPPVYGSGSSSSQNSVESSAKKDEPAGVETPVSTTSSKKDSISTSAESVVSTFSSEPVYSSLVESSSALDAPKSTDAVKSVEAKETTKVEEVSSSALESTLNQLTQQATVTSTLYSSASPSSSPVLSSSKPASTSNPEKLSSAPVTITKTAVATEVYESRDNGEIVSVSIDSKHLPTSNAAAAAPTADNAPAHENGLYVFTVTQFATTTTYVTRAPRTTAVTVFNENVVTQVIVRTEWTQNTPVTVYARPTAAVKAATGNGASAAAEPNTGTGSGGTTPSYVKRYMEKAKDLVKRMF</sequence>